<evidence type="ECO:0000255" key="1">
    <source>
        <dbReference type="HAMAP-Rule" id="MF_00298"/>
    </source>
</evidence>
<organism>
    <name type="scientific">Francisella tularensis subsp. tularensis (strain SCHU S4 / Schu 4)</name>
    <dbReference type="NCBI Taxonomy" id="177416"/>
    <lineage>
        <taxon>Bacteria</taxon>
        <taxon>Pseudomonadati</taxon>
        <taxon>Pseudomonadota</taxon>
        <taxon>Gammaproteobacteria</taxon>
        <taxon>Thiotrichales</taxon>
        <taxon>Francisellaceae</taxon>
        <taxon>Francisella</taxon>
    </lineage>
</organism>
<gene>
    <name evidence="1" type="primary">rppH</name>
    <name evidence="1" type="synonym">nudH</name>
    <name type="ordered locus">FTT_0160</name>
</gene>
<proteinExistence type="inferred from homology"/>
<protein>
    <recommendedName>
        <fullName evidence="1">RNA pyrophosphohydrolase</fullName>
        <ecNumber evidence="1">3.6.1.-</ecNumber>
    </recommendedName>
    <alternativeName>
        <fullName evidence="1">(Di)nucleoside polyphosphate hydrolase</fullName>
    </alternativeName>
</protein>
<accession>Q5NIB6</accession>
<comment type="function">
    <text evidence="1">Accelerates the degradation of transcripts by removing pyrophosphate from the 5'-end of triphosphorylated RNA, leading to a more labile monophosphorylated state that can stimulate subsequent ribonuclease cleavage.</text>
</comment>
<comment type="cofactor">
    <cofactor evidence="1">
        <name>a divalent metal cation</name>
        <dbReference type="ChEBI" id="CHEBI:60240"/>
    </cofactor>
</comment>
<comment type="similarity">
    <text evidence="1">Belongs to the Nudix hydrolase family. RppH subfamily.</text>
</comment>
<feature type="chain" id="PRO_0000231908" description="RNA pyrophosphohydrolase">
    <location>
        <begin position="1"/>
        <end position="155"/>
    </location>
</feature>
<feature type="domain" description="Nudix hydrolase" evidence="1">
    <location>
        <begin position="6"/>
        <end position="148"/>
    </location>
</feature>
<feature type="short sequence motif" description="Nudix box">
    <location>
        <begin position="38"/>
        <end position="59"/>
    </location>
</feature>
<sequence>MIDKSGYRANVAIVLLNKQNRVFWGQRRNRTSWQFPQGGVATGETPLQAMYRELHEEIGLRPQDVEVIASTRDWYKYDIPDSLVRTKEPICIGQKQKWFLLKLKSPESYIDLDANDSPEFDNWRWVSYWYPINHVVYFKQEVYRKALTYFKEYIA</sequence>
<dbReference type="EC" id="3.6.1.-" evidence="1"/>
<dbReference type="EMBL" id="AJ749949">
    <property type="protein sequence ID" value="CAG44793.1"/>
    <property type="molecule type" value="Genomic_DNA"/>
</dbReference>
<dbReference type="RefSeq" id="WP_003017197.1">
    <property type="nucleotide sequence ID" value="NZ_CP010290.1"/>
</dbReference>
<dbReference type="RefSeq" id="YP_169226.1">
    <property type="nucleotide sequence ID" value="NC_006570.2"/>
</dbReference>
<dbReference type="SMR" id="Q5NIB6"/>
<dbReference type="STRING" id="177416.FTT_0160"/>
<dbReference type="DNASU" id="3191741"/>
<dbReference type="EnsemblBacteria" id="CAG44793">
    <property type="protein sequence ID" value="CAG44793"/>
    <property type="gene ID" value="FTT_0160"/>
</dbReference>
<dbReference type="KEGG" id="ftu:FTT_0160"/>
<dbReference type="eggNOG" id="COG0494">
    <property type="taxonomic scope" value="Bacteria"/>
</dbReference>
<dbReference type="OrthoDB" id="9816040at2"/>
<dbReference type="Proteomes" id="UP000001174">
    <property type="component" value="Chromosome"/>
</dbReference>
<dbReference type="GO" id="GO:0016462">
    <property type="term" value="F:pyrophosphatase activity"/>
    <property type="evidence" value="ECO:0007669"/>
    <property type="project" value="UniProtKB-ARBA"/>
</dbReference>
<dbReference type="CDD" id="cd03671">
    <property type="entry name" value="NUDIX_Ap4A_hydrolase_plant_like"/>
    <property type="match status" value="1"/>
</dbReference>
<dbReference type="Gene3D" id="3.90.79.10">
    <property type="entry name" value="Nucleoside Triphosphate Pyrophosphohydrolase"/>
    <property type="match status" value="1"/>
</dbReference>
<dbReference type="HAMAP" id="MF_00298">
    <property type="entry name" value="Nudix_RppH"/>
    <property type="match status" value="1"/>
</dbReference>
<dbReference type="InterPro" id="IPR020476">
    <property type="entry name" value="Nudix_hydrolase"/>
</dbReference>
<dbReference type="InterPro" id="IPR015797">
    <property type="entry name" value="NUDIX_hydrolase-like_dom_sf"/>
</dbReference>
<dbReference type="InterPro" id="IPR020084">
    <property type="entry name" value="NUDIX_hydrolase_CS"/>
</dbReference>
<dbReference type="InterPro" id="IPR000086">
    <property type="entry name" value="NUDIX_hydrolase_dom"/>
</dbReference>
<dbReference type="InterPro" id="IPR022927">
    <property type="entry name" value="RppH"/>
</dbReference>
<dbReference type="NCBIfam" id="NF001936">
    <property type="entry name" value="PRK00714.1-3"/>
    <property type="match status" value="1"/>
</dbReference>
<dbReference type="NCBIfam" id="NF001937">
    <property type="entry name" value="PRK00714.1-4"/>
    <property type="match status" value="1"/>
</dbReference>
<dbReference type="NCBIfam" id="NF001938">
    <property type="entry name" value="PRK00714.1-5"/>
    <property type="match status" value="1"/>
</dbReference>
<dbReference type="PANTHER" id="PTHR43736">
    <property type="entry name" value="ADP-RIBOSE PYROPHOSPHATASE"/>
    <property type="match status" value="1"/>
</dbReference>
<dbReference type="PANTHER" id="PTHR43736:SF1">
    <property type="entry name" value="DIHYDRONEOPTERIN TRIPHOSPHATE DIPHOSPHATASE"/>
    <property type="match status" value="1"/>
</dbReference>
<dbReference type="Pfam" id="PF00293">
    <property type="entry name" value="NUDIX"/>
    <property type="match status" value="1"/>
</dbReference>
<dbReference type="PRINTS" id="PR00502">
    <property type="entry name" value="NUDIXFAMILY"/>
</dbReference>
<dbReference type="SUPFAM" id="SSF55811">
    <property type="entry name" value="Nudix"/>
    <property type="match status" value="1"/>
</dbReference>
<dbReference type="PROSITE" id="PS51462">
    <property type="entry name" value="NUDIX"/>
    <property type="match status" value="1"/>
</dbReference>
<dbReference type="PROSITE" id="PS00893">
    <property type="entry name" value="NUDIX_BOX"/>
    <property type="match status" value="1"/>
</dbReference>
<reference key="1">
    <citation type="journal article" date="2005" name="Nat. Genet.">
        <title>The complete genome sequence of Francisella tularensis, the causative agent of tularemia.</title>
        <authorList>
            <person name="Larsson P."/>
            <person name="Oyston P.C.F."/>
            <person name="Chain P."/>
            <person name="Chu M.C."/>
            <person name="Duffield M."/>
            <person name="Fuxelius H.-H."/>
            <person name="Garcia E."/>
            <person name="Haelltorp G."/>
            <person name="Johansson D."/>
            <person name="Isherwood K.E."/>
            <person name="Karp P.D."/>
            <person name="Larsson E."/>
            <person name="Liu Y."/>
            <person name="Michell S."/>
            <person name="Prior J."/>
            <person name="Prior R."/>
            <person name="Malfatti S."/>
            <person name="Sjoestedt A."/>
            <person name="Svensson K."/>
            <person name="Thompson N."/>
            <person name="Vergez L."/>
            <person name="Wagg J.K."/>
            <person name="Wren B.W."/>
            <person name="Lindler L.E."/>
            <person name="Andersson S.G.E."/>
            <person name="Forsman M."/>
            <person name="Titball R.W."/>
        </authorList>
    </citation>
    <scope>NUCLEOTIDE SEQUENCE [LARGE SCALE GENOMIC DNA]</scope>
    <source>
        <strain>SCHU S4 / Schu 4</strain>
    </source>
</reference>
<keyword id="KW-0378">Hydrolase</keyword>
<keyword id="KW-1185">Reference proteome</keyword>
<name>RPPH_FRATT</name>